<evidence type="ECO:0000255" key="1">
    <source>
        <dbReference type="HAMAP-Rule" id="MF_01689"/>
    </source>
</evidence>
<keyword id="KW-0028">Amino-acid biosynthesis</keyword>
<keyword id="KW-0032">Aminotransferase</keyword>
<keyword id="KW-0963">Cytoplasm</keyword>
<keyword id="KW-0641">Proline biosynthesis</keyword>
<keyword id="KW-0663">Pyridoxal phosphate</keyword>
<keyword id="KW-1185">Reference proteome</keyword>
<keyword id="KW-0808">Transferase</keyword>
<comment type="function">
    <text evidence="1">Catalyzes the interconversion of ornithine to glutamate semialdehyde.</text>
</comment>
<comment type="catalytic activity">
    <reaction evidence="1">
        <text>a 2-oxocarboxylate + L-ornithine = L-glutamate 5-semialdehyde + an L-alpha-amino acid</text>
        <dbReference type="Rhea" id="RHEA:13877"/>
        <dbReference type="ChEBI" id="CHEBI:35179"/>
        <dbReference type="ChEBI" id="CHEBI:46911"/>
        <dbReference type="ChEBI" id="CHEBI:58066"/>
        <dbReference type="ChEBI" id="CHEBI:59869"/>
        <dbReference type="EC" id="2.6.1.13"/>
    </reaction>
</comment>
<comment type="cofactor">
    <cofactor evidence="1">
        <name>pyridoxal 5'-phosphate</name>
        <dbReference type="ChEBI" id="CHEBI:597326"/>
    </cofactor>
</comment>
<comment type="pathway">
    <text evidence="1">Amino-acid biosynthesis; L-proline biosynthesis; L-glutamate 5-semialdehyde from L-ornithine: step 1/1.</text>
</comment>
<comment type="subcellular location">
    <subcellularLocation>
        <location evidence="1">Cytoplasm</location>
    </subcellularLocation>
</comment>
<comment type="similarity">
    <text evidence="1">Belongs to the class-III pyridoxal-phosphate-dependent aminotransferase family. OAT subfamily.</text>
</comment>
<gene>
    <name evidence="1" type="primary">rocD</name>
    <name type="ordered locus">OB2287</name>
</gene>
<dbReference type="EC" id="2.6.1.13" evidence="1"/>
<dbReference type="EMBL" id="BA000028">
    <property type="protein sequence ID" value="BAC14243.1"/>
    <property type="molecule type" value="Genomic_DNA"/>
</dbReference>
<dbReference type="RefSeq" id="WP_011066680.1">
    <property type="nucleotide sequence ID" value="NC_004193.1"/>
</dbReference>
<dbReference type="SMR" id="Q8EP32"/>
<dbReference type="STRING" id="221109.gene:10734535"/>
<dbReference type="KEGG" id="oih:OB2287"/>
<dbReference type="eggNOG" id="COG4992">
    <property type="taxonomic scope" value="Bacteria"/>
</dbReference>
<dbReference type="HOGENOM" id="CLU_016922_10_3_9"/>
<dbReference type="OrthoDB" id="9807885at2"/>
<dbReference type="PhylomeDB" id="Q8EP32"/>
<dbReference type="UniPathway" id="UPA00098">
    <property type="reaction ID" value="UER00358"/>
</dbReference>
<dbReference type="Proteomes" id="UP000000822">
    <property type="component" value="Chromosome"/>
</dbReference>
<dbReference type="GO" id="GO:0005737">
    <property type="term" value="C:cytoplasm"/>
    <property type="evidence" value="ECO:0007669"/>
    <property type="project" value="UniProtKB-SubCell"/>
</dbReference>
<dbReference type="GO" id="GO:0042802">
    <property type="term" value="F:identical protein binding"/>
    <property type="evidence" value="ECO:0007669"/>
    <property type="project" value="TreeGrafter"/>
</dbReference>
<dbReference type="GO" id="GO:0004587">
    <property type="term" value="F:ornithine aminotransferase activity"/>
    <property type="evidence" value="ECO:0007669"/>
    <property type="project" value="UniProtKB-UniRule"/>
</dbReference>
<dbReference type="GO" id="GO:0030170">
    <property type="term" value="F:pyridoxal phosphate binding"/>
    <property type="evidence" value="ECO:0007669"/>
    <property type="project" value="UniProtKB-UniRule"/>
</dbReference>
<dbReference type="GO" id="GO:0055129">
    <property type="term" value="P:L-proline biosynthetic process"/>
    <property type="evidence" value="ECO:0007669"/>
    <property type="project" value="UniProtKB-UniRule"/>
</dbReference>
<dbReference type="CDD" id="cd00610">
    <property type="entry name" value="OAT_like"/>
    <property type="match status" value="1"/>
</dbReference>
<dbReference type="FunFam" id="3.40.640.10:FF:000011">
    <property type="entry name" value="Ornithine aminotransferase"/>
    <property type="match status" value="1"/>
</dbReference>
<dbReference type="Gene3D" id="3.90.1150.10">
    <property type="entry name" value="Aspartate Aminotransferase, domain 1"/>
    <property type="match status" value="1"/>
</dbReference>
<dbReference type="Gene3D" id="3.40.640.10">
    <property type="entry name" value="Type I PLP-dependent aspartate aminotransferase-like (Major domain)"/>
    <property type="match status" value="1"/>
</dbReference>
<dbReference type="HAMAP" id="MF_01689">
    <property type="entry name" value="Ornith_aminotrans_3"/>
    <property type="match status" value="1"/>
</dbReference>
<dbReference type="InterPro" id="IPR005814">
    <property type="entry name" value="Aminotrans_3"/>
</dbReference>
<dbReference type="InterPro" id="IPR049704">
    <property type="entry name" value="Aminotrans_3_PPA_site"/>
</dbReference>
<dbReference type="InterPro" id="IPR050103">
    <property type="entry name" value="Class-III_PLP-dep_AT"/>
</dbReference>
<dbReference type="InterPro" id="IPR010164">
    <property type="entry name" value="Orn_aminotrans"/>
</dbReference>
<dbReference type="InterPro" id="IPR034757">
    <property type="entry name" value="Ornith_aminotrans_bact"/>
</dbReference>
<dbReference type="InterPro" id="IPR015424">
    <property type="entry name" value="PyrdxlP-dep_Trfase"/>
</dbReference>
<dbReference type="InterPro" id="IPR015421">
    <property type="entry name" value="PyrdxlP-dep_Trfase_major"/>
</dbReference>
<dbReference type="InterPro" id="IPR015422">
    <property type="entry name" value="PyrdxlP-dep_Trfase_small"/>
</dbReference>
<dbReference type="NCBIfam" id="TIGR01885">
    <property type="entry name" value="Orn_aminotrans"/>
    <property type="match status" value="1"/>
</dbReference>
<dbReference type="NCBIfam" id="NF003145">
    <property type="entry name" value="PRK04073.1"/>
    <property type="match status" value="1"/>
</dbReference>
<dbReference type="PANTHER" id="PTHR11986">
    <property type="entry name" value="AMINOTRANSFERASE CLASS III"/>
    <property type="match status" value="1"/>
</dbReference>
<dbReference type="PANTHER" id="PTHR11986:SF18">
    <property type="entry name" value="ORNITHINE AMINOTRANSFERASE, MITOCHONDRIAL"/>
    <property type="match status" value="1"/>
</dbReference>
<dbReference type="Pfam" id="PF00202">
    <property type="entry name" value="Aminotran_3"/>
    <property type="match status" value="1"/>
</dbReference>
<dbReference type="PIRSF" id="PIRSF000521">
    <property type="entry name" value="Transaminase_4ab_Lys_Orn"/>
    <property type="match status" value="1"/>
</dbReference>
<dbReference type="SUPFAM" id="SSF53383">
    <property type="entry name" value="PLP-dependent transferases"/>
    <property type="match status" value="1"/>
</dbReference>
<dbReference type="PROSITE" id="PS00600">
    <property type="entry name" value="AA_TRANSFER_CLASS_3"/>
    <property type="match status" value="1"/>
</dbReference>
<sequence length="398" mass="43838">MTITSTNIIEETNYYGAHNYHPLPIVVSEANGVWVKDPEGNSYMDMLSAYSAVNQGHRHPKIIEALKNQADKVTLTSRAFHNELLGPWTKRMAKLTKKDKVLPMNTGVEAVETAIKAARRWAYQVKGVTENQAEIIAADGNFHGRTLNAISLSNDPDATKNYGPFVPGINKVSYGDINAIEKAITENTAAIILEPIQGEAGIIIPPEGYLKKVRELCSEKNILFIADEVQTGFARTGKMFACEWENVEPDIYVMGKALGGGVFPVSAIAANNEIMDVFTPGSHGSTFGGNPLACAVSMAAIDVIEEENLVNKSLESGKYFADKLRAVNFEGIKEVRARGLFIGMEFHQPVREICEKLKDKGILCKETHVNTIRFAPPLVITKDEMDWAIQRIEEVLTN</sequence>
<organism>
    <name type="scientific">Oceanobacillus iheyensis (strain DSM 14371 / CIP 107618 / JCM 11309 / KCTC 3954 / HTE831)</name>
    <dbReference type="NCBI Taxonomy" id="221109"/>
    <lineage>
        <taxon>Bacteria</taxon>
        <taxon>Bacillati</taxon>
        <taxon>Bacillota</taxon>
        <taxon>Bacilli</taxon>
        <taxon>Bacillales</taxon>
        <taxon>Bacillaceae</taxon>
        <taxon>Oceanobacillus</taxon>
    </lineage>
</organism>
<feature type="chain" id="PRO_0000120508" description="Ornithine aminotransferase">
    <location>
        <begin position="1"/>
        <end position="398"/>
    </location>
</feature>
<feature type="modified residue" description="N6-(pyridoxal phosphate)lysine" evidence="1">
    <location>
        <position position="256"/>
    </location>
</feature>
<proteinExistence type="inferred from homology"/>
<protein>
    <recommendedName>
        <fullName evidence="1">Ornithine aminotransferase</fullName>
        <shortName evidence="1">OAT</shortName>
        <ecNumber evidence="1">2.6.1.13</ecNumber>
    </recommendedName>
    <alternativeName>
        <fullName evidence="1">Ornithine--oxo-acid aminotransferase</fullName>
    </alternativeName>
</protein>
<name>OAT_OCEIH</name>
<accession>Q8EP32</accession>
<reference key="1">
    <citation type="journal article" date="2002" name="Nucleic Acids Res.">
        <title>Genome sequence of Oceanobacillus iheyensis isolated from the Iheya Ridge and its unexpected adaptive capabilities to extreme environments.</title>
        <authorList>
            <person name="Takami H."/>
            <person name="Takaki Y."/>
            <person name="Uchiyama I."/>
        </authorList>
    </citation>
    <scope>NUCLEOTIDE SEQUENCE [LARGE SCALE GENOMIC DNA]</scope>
    <source>
        <strain>DSM 14371 / CIP 107618 / JCM 11309 / KCTC 3954 / HTE831</strain>
    </source>
</reference>